<dbReference type="EMBL" id="CM001235">
    <property type="protein sequence ID" value="EHA48284.1"/>
    <property type="molecule type" value="Genomic_DNA"/>
</dbReference>
<dbReference type="RefSeq" id="XP_003717868.1">
    <property type="nucleotide sequence ID" value="XM_003717820.1"/>
</dbReference>
<dbReference type="SMR" id="A4RD79"/>
<dbReference type="FunCoup" id="A4RD79">
    <property type="interactions" value="917"/>
</dbReference>
<dbReference type="STRING" id="242507.A4RD79"/>
<dbReference type="EnsemblFungi" id="MGG_01071T0">
    <property type="protein sequence ID" value="MGG_01071T0"/>
    <property type="gene ID" value="MGG_01071"/>
</dbReference>
<dbReference type="GeneID" id="2674146"/>
<dbReference type="KEGG" id="mgr:MGG_01071"/>
<dbReference type="VEuPathDB" id="FungiDB:MGG_01071"/>
<dbReference type="eggNOG" id="KOG0794">
    <property type="taxonomic scope" value="Eukaryota"/>
</dbReference>
<dbReference type="HOGENOM" id="CLU_034754_2_0_1"/>
<dbReference type="InParanoid" id="A4RD79"/>
<dbReference type="OMA" id="CLLHPPH"/>
<dbReference type="OrthoDB" id="10266018at2759"/>
<dbReference type="Proteomes" id="UP000009058">
    <property type="component" value="Chromosome 5"/>
</dbReference>
<dbReference type="GO" id="GO:0005634">
    <property type="term" value="C:nucleus"/>
    <property type="evidence" value="ECO:0007669"/>
    <property type="project" value="UniProtKB-SubCell"/>
</dbReference>
<dbReference type="GO" id="GO:0016538">
    <property type="term" value="F:cyclin-dependent protein serine/threonine kinase regulator activity"/>
    <property type="evidence" value="ECO:0007669"/>
    <property type="project" value="InterPro"/>
</dbReference>
<dbReference type="GO" id="GO:0006357">
    <property type="term" value="P:regulation of transcription by RNA polymerase II"/>
    <property type="evidence" value="ECO:0007669"/>
    <property type="project" value="InterPro"/>
</dbReference>
<dbReference type="CDD" id="cd20513">
    <property type="entry name" value="CYCLIN_CCNC_rpt1"/>
    <property type="match status" value="1"/>
</dbReference>
<dbReference type="CDD" id="cd20546">
    <property type="entry name" value="CYCLIN_SpCG1C_ScCTK2-like_rpt2"/>
    <property type="match status" value="1"/>
</dbReference>
<dbReference type="Gene3D" id="1.10.472.10">
    <property type="entry name" value="Cyclin-like"/>
    <property type="match status" value="2"/>
</dbReference>
<dbReference type="InterPro" id="IPR013763">
    <property type="entry name" value="Cyclin-like_dom"/>
</dbReference>
<dbReference type="InterPro" id="IPR036915">
    <property type="entry name" value="Cyclin-like_sf"/>
</dbReference>
<dbReference type="InterPro" id="IPR043198">
    <property type="entry name" value="Cyclin/Ssn8"/>
</dbReference>
<dbReference type="InterPro" id="IPR006671">
    <property type="entry name" value="Cyclin_N"/>
</dbReference>
<dbReference type="PANTHER" id="PTHR10026">
    <property type="entry name" value="CYCLIN"/>
    <property type="match status" value="1"/>
</dbReference>
<dbReference type="Pfam" id="PF00134">
    <property type="entry name" value="Cyclin_N"/>
    <property type="match status" value="1"/>
</dbReference>
<dbReference type="PIRSF" id="PIRSF028758">
    <property type="entry name" value="Cyclin, C/H/G types"/>
    <property type="match status" value="1"/>
</dbReference>
<dbReference type="SMART" id="SM00385">
    <property type="entry name" value="CYCLIN"/>
    <property type="match status" value="1"/>
</dbReference>
<dbReference type="SUPFAM" id="SSF47954">
    <property type="entry name" value="Cyclin-like"/>
    <property type="match status" value="2"/>
</dbReference>
<sequence>MAANFWESTQRRNWLFTKEELAARRQQLENEDPSLVTMYPLPEWRHLYNYFNYQMLRLAKNLSIRQQAIATAQVYMKRFYTRVEIRSTNPTLVLVTAVYLACKMEEMPLHIRNVSLEAKKVWPMETPSLEIAKIGECEFWLISEMSAQLIVHQPYRTLTALQQDFQLANDDHVLAVSFLNDHFMTDLPLLYAPHTIALAAIMLALVLRLSKASSSNNAAAGQQGGAQAGPLGITLASGLSMFQQAVAAKAMTPGGSGSPAMSSPIQQNPPNQAYQLTPQQQEMFRQQQMQQQNRQPETQAKDSPQKEKSKLQRFAAWLSESGVDIEAMIDCTQELIAFYECQESYNEQITRDQINRFVKARGL</sequence>
<feature type="chain" id="PRO_0000314278" description="RNA polymerase II holoenzyme cyclin-like subunit">
    <location>
        <begin position="1"/>
        <end position="363"/>
    </location>
</feature>
<feature type="domain" description="Cyclin N-terminal">
    <location>
        <begin position="53"/>
        <end position="143"/>
    </location>
</feature>
<feature type="region of interest" description="Disordered" evidence="2">
    <location>
        <begin position="252"/>
        <end position="312"/>
    </location>
</feature>
<feature type="compositionally biased region" description="Polar residues" evidence="2">
    <location>
        <begin position="265"/>
        <end position="276"/>
    </location>
</feature>
<feature type="compositionally biased region" description="Low complexity" evidence="2">
    <location>
        <begin position="277"/>
        <end position="298"/>
    </location>
</feature>
<feature type="compositionally biased region" description="Basic and acidic residues" evidence="2">
    <location>
        <begin position="299"/>
        <end position="310"/>
    </location>
</feature>
<protein>
    <recommendedName>
        <fullName>RNA polymerase II holoenzyme cyclin-like subunit</fullName>
    </recommendedName>
</protein>
<accession>A4RD79</accession>
<accession>G4NCI7</accession>
<reference key="1">
    <citation type="journal article" date="2005" name="Nature">
        <title>The genome sequence of the rice blast fungus Magnaporthe grisea.</title>
        <authorList>
            <person name="Dean R.A."/>
            <person name="Talbot N.J."/>
            <person name="Ebbole D.J."/>
            <person name="Farman M.L."/>
            <person name="Mitchell T.K."/>
            <person name="Orbach M.J."/>
            <person name="Thon M.R."/>
            <person name="Kulkarni R."/>
            <person name="Xu J.-R."/>
            <person name="Pan H."/>
            <person name="Read N.D."/>
            <person name="Lee Y.-H."/>
            <person name="Carbone I."/>
            <person name="Brown D."/>
            <person name="Oh Y.Y."/>
            <person name="Donofrio N."/>
            <person name="Jeong J.S."/>
            <person name="Soanes D.M."/>
            <person name="Djonovic S."/>
            <person name="Kolomiets E."/>
            <person name="Rehmeyer C."/>
            <person name="Li W."/>
            <person name="Harding M."/>
            <person name="Kim S."/>
            <person name="Lebrun M.-H."/>
            <person name="Bohnert H."/>
            <person name="Coughlan S."/>
            <person name="Butler J."/>
            <person name="Calvo S.E."/>
            <person name="Ma L.-J."/>
            <person name="Nicol R."/>
            <person name="Purcell S."/>
            <person name="Nusbaum C."/>
            <person name="Galagan J.E."/>
            <person name="Birren B.W."/>
        </authorList>
    </citation>
    <scope>NUCLEOTIDE SEQUENCE [LARGE SCALE GENOMIC DNA]</scope>
    <source>
        <strain>70-15 / ATCC MYA-4617 / FGSC 8958</strain>
    </source>
</reference>
<evidence type="ECO:0000250" key="1"/>
<evidence type="ECO:0000256" key="2">
    <source>
        <dbReference type="SAM" id="MobiDB-lite"/>
    </source>
</evidence>
<evidence type="ECO:0000305" key="3"/>
<keyword id="KW-0010">Activator</keyword>
<keyword id="KW-0195">Cyclin</keyword>
<keyword id="KW-0539">Nucleus</keyword>
<keyword id="KW-1185">Reference proteome</keyword>
<keyword id="KW-0678">Repressor</keyword>
<keyword id="KW-0804">Transcription</keyword>
<keyword id="KW-0805">Transcription regulation</keyword>
<gene>
    <name type="primary">SSN8</name>
    <name type="ORF">MGG_01071</name>
</gene>
<comment type="function">
    <text evidence="1">Component of the SRB8-11 complex. The SRB8-11 complex is a regulatory module of the Mediator complex which is itself involved in regulation of basal and activated RNA polymerase II-dependent transcription. The SRB8-11 complex may be involved in the transcriptional repression of a subset of genes regulated by Mediator. It may inhibit the association of the Mediator complex with RNA polymerase II to form the holoenzyme complex. The SRB8-11 complex phosphorylates the C-terminal domain (CTD) of the largest subunit of RNA polymerase II (By similarity).</text>
</comment>
<comment type="subunit">
    <text evidence="1">Component of the SRB8-11 complex, a regulatory module of the Mediator complex.</text>
</comment>
<comment type="subcellular location">
    <subcellularLocation>
        <location evidence="3">Nucleus</location>
    </subcellularLocation>
</comment>
<comment type="similarity">
    <text evidence="3">Belongs to the cyclin family. Cyclin C subfamily.</text>
</comment>
<proteinExistence type="inferred from homology"/>
<name>SSN8_PYRO7</name>
<organism>
    <name type="scientific">Pyricularia oryzae (strain 70-15 / ATCC MYA-4617 / FGSC 8958)</name>
    <name type="common">Rice blast fungus</name>
    <name type="synonym">Magnaporthe oryzae</name>
    <dbReference type="NCBI Taxonomy" id="242507"/>
    <lineage>
        <taxon>Eukaryota</taxon>
        <taxon>Fungi</taxon>
        <taxon>Dikarya</taxon>
        <taxon>Ascomycota</taxon>
        <taxon>Pezizomycotina</taxon>
        <taxon>Sordariomycetes</taxon>
        <taxon>Sordariomycetidae</taxon>
        <taxon>Magnaporthales</taxon>
        <taxon>Pyriculariaceae</taxon>
        <taxon>Pyricularia</taxon>
    </lineage>
</organism>